<sequence length="200" mass="22846">MLSLILTIFFVHVAIYLVNTVGATTIDTLLWILYLKLPTSTSRNARQQSRLKREVVQLKREMNNTSSQDEFAKWAKLRRKHDKAMDEYEAMNKKLTAQKTSFDWSVKIARWLSTNGLKIFLQFYYSKTPVFALPAGWFPFYVEWVLSFPRAPRGSVSVQVWNSVCATAIAVMAEIVTSMLLQLRSRSASPASTAKAQKAQ</sequence>
<organism>
    <name type="scientific">Aspergillus fumigatus (strain CBS 144.89 / FGSC A1163 / CEA10)</name>
    <name type="common">Neosartorya fumigata</name>
    <dbReference type="NCBI Taxonomy" id="451804"/>
    <lineage>
        <taxon>Eukaryota</taxon>
        <taxon>Fungi</taxon>
        <taxon>Dikarya</taxon>
        <taxon>Ascomycota</taxon>
        <taxon>Pezizomycotina</taxon>
        <taxon>Eurotiomycetes</taxon>
        <taxon>Eurotiomycetidae</taxon>
        <taxon>Eurotiales</taxon>
        <taxon>Aspergillaceae</taxon>
        <taxon>Aspergillus</taxon>
        <taxon>Aspergillus subgen. Fumigati</taxon>
    </lineage>
</organism>
<feature type="chain" id="PRO_0000388578" description="Protein get1">
    <location>
        <begin position="1"/>
        <end position="200"/>
    </location>
</feature>
<feature type="topological domain" description="Lumenal" evidence="1">
    <location>
        <begin position="1"/>
        <end position="4"/>
    </location>
</feature>
<feature type="transmembrane region" description="Helical" evidence="1">
    <location>
        <begin position="5"/>
        <end position="24"/>
    </location>
</feature>
<feature type="topological domain" description="Cytoplasmic" evidence="1">
    <location>
        <begin position="25"/>
        <end position="110"/>
    </location>
</feature>
<feature type="transmembrane region" description="Helical" evidence="1">
    <location>
        <begin position="111"/>
        <end position="131"/>
    </location>
</feature>
<feature type="topological domain" description="Lumenal" evidence="1">
    <location>
        <begin position="132"/>
        <end position="155"/>
    </location>
</feature>
<feature type="transmembrane region" description="Helical" evidence="1">
    <location>
        <begin position="156"/>
        <end position="172"/>
    </location>
</feature>
<feature type="topological domain" description="Cytoplasmic" evidence="1">
    <location>
        <begin position="173"/>
        <end position="200"/>
    </location>
</feature>
<feature type="coiled-coil region" evidence="1">
    <location>
        <begin position="42"/>
        <end position="100"/>
    </location>
</feature>
<dbReference type="EMBL" id="DS499598">
    <property type="protein sequence ID" value="EDP50014.1"/>
    <property type="molecule type" value="Genomic_DNA"/>
</dbReference>
<dbReference type="SMR" id="B0Y5H9"/>
<dbReference type="EnsemblFungi" id="EDP50014">
    <property type="protein sequence ID" value="EDP50014"/>
    <property type="gene ID" value="AFUB_063460"/>
</dbReference>
<dbReference type="VEuPathDB" id="FungiDB:AFUB_063460"/>
<dbReference type="HOGENOM" id="CLU_089418_1_0_1"/>
<dbReference type="OrthoDB" id="73395at5052"/>
<dbReference type="PhylomeDB" id="B0Y5H9"/>
<dbReference type="Proteomes" id="UP000001699">
    <property type="component" value="Unassembled WGS sequence"/>
</dbReference>
<dbReference type="GO" id="GO:0005789">
    <property type="term" value="C:endoplasmic reticulum membrane"/>
    <property type="evidence" value="ECO:0007669"/>
    <property type="project" value="UniProtKB-SubCell"/>
</dbReference>
<dbReference type="GO" id="GO:0043529">
    <property type="term" value="C:GET complex"/>
    <property type="evidence" value="ECO:0007669"/>
    <property type="project" value="InterPro"/>
</dbReference>
<dbReference type="GO" id="GO:0043495">
    <property type="term" value="F:protein-membrane adaptor activity"/>
    <property type="evidence" value="ECO:0007669"/>
    <property type="project" value="TreeGrafter"/>
</dbReference>
<dbReference type="GO" id="GO:0071816">
    <property type="term" value="P:tail-anchored membrane protein insertion into ER membrane"/>
    <property type="evidence" value="ECO:0007669"/>
    <property type="project" value="InterPro"/>
</dbReference>
<dbReference type="FunFam" id="1.10.287.660:FF:000006">
    <property type="entry name" value="Protein GET1"/>
    <property type="match status" value="1"/>
</dbReference>
<dbReference type="Gene3D" id="1.10.287.660">
    <property type="entry name" value="Helix hairpin bin"/>
    <property type="match status" value="1"/>
</dbReference>
<dbReference type="HAMAP" id="MF_03113">
    <property type="entry name" value="Get1"/>
    <property type="match status" value="1"/>
</dbReference>
<dbReference type="InterPro" id="IPR028945">
    <property type="entry name" value="Get1"/>
</dbReference>
<dbReference type="InterPro" id="IPR027538">
    <property type="entry name" value="Get1_fungi"/>
</dbReference>
<dbReference type="InterPro" id="IPR029012">
    <property type="entry name" value="Helix_hairpin_bin_sf"/>
</dbReference>
<dbReference type="PANTHER" id="PTHR42650:SF1">
    <property type="entry name" value="GUIDED ENTRY OF TAIL-ANCHORED PROTEINS FACTOR 1"/>
    <property type="match status" value="1"/>
</dbReference>
<dbReference type="PANTHER" id="PTHR42650">
    <property type="entry name" value="TAIL-ANCHORED PROTEIN INSERTION RECEPTOR WRB"/>
    <property type="match status" value="1"/>
</dbReference>
<dbReference type="Pfam" id="PF04420">
    <property type="entry name" value="CHD5"/>
    <property type="match status" value="1"/>
</dbReference>
<proteinExistence type="inferred from homology"/>
<comment type="function">
    <text evidence="1">Required for the post-translational delivery of tail-anchored (TA) proteins to the endoplasmic reticulum. Acts as a membrane receptor for soluble get3, which recognizes and selectively binds the transmembrane domain of TA proteins in the cytosol.</text>
</comment>
<comment type="subunit">
    <text evidence="1">Interacts with get3.</text>
</comment>
<comment type="subcellular location">
    <subcellularLocation>
        <location evidence="1">Endoplasmic reticulum membrane</location>
        <topology evidence="1">Multi-pass membrane protein</topology>
    </subcellularLocation>
</comment>
<comment type="similarity">
    <text evidence="1">Belongs to the WRB/GET1 family.</text>
</comment>
<accession>B0Y5H9</accession>
<evidence type="ECO:0000255" key="1">
    <source>
        <dbReference type="HAMAP-Rule" id="MF_03113"/>
    </source>
</evidence>
<reference key="1">
    <citation type="journal article" date="2008" name="PLoS Genet.">
        <title>Genomic islands in the pathogenic filamentous fungus Aspergillus fumigatus.</title>
        <authorList>
            <person name="Fedorova N.D."/>
            <person name="Khaldi N."/>
            <person name="Joardar V.S."/>
            <person name="Maiti R."/>
            <person name="Amedeo P."/>
            <person name="Anderson M.J."/>
            <person name="Crabtree J."/>
            <person name="Silva J.C."/>
            <person name="Badger J.H."/>
            <person name="Albarraq A."/>
            <person name="Angiuoli S."/>
            <person name="Bussey H."/>
            <person name="Bowyer P."/>
            <person name="Cotty P.J."/>
            <person name="Dyer P.S."/>
            <person name="Egan A."/>
            <person name="Galens K."/>
            <person name="Fraser-Liggett C.M."/>
            <person name="Haas B.J."/>
            <person name="Inman J.M."/>
            <person name="Kent R."/>
            <person name="Lemieux S."/>
            <person name="Malavazi I."/>
            <person name="Orvis J."/>
            <person name="Roemer T."/>
            <person name="Ronning C.M."/>
            <person name="Sundaram J.P."/>
            <person name="Sutton G."/>
            <person name="Turner G."/>
            <person name="Venter J.C."/>
            <person name="White O.R."/>
            <person name="Whitty B.R."/>
            <person name="Youngman P."/>
            <person name="Wolfe K.H."/>
            <person name="Goldman G.H."/>
            <person name="Wortman J.R."/>
            <person name="Jiang B."/>
            <person name="Denning D.W."/>
            <person name="Nierman W.C."/>
        </authorList>
    </citation>
    <scope>NUCLEOTIDE SEQUENCE [LARGE SCALE GENOMIC DNA]</scope>
    <source>
        <strain>CBS 144.89 / FGSC A1163 / CEA10</strain>
    </source>
</reference>
<gene>
    <name type="primary">get1</name>
    <name type="ORF">AFUB_063460</name>
</gene>
<protein>
    <recommendedName>
        <fullName evidence="1">Protein get1</fullName>
    </recommendedName>
    <alternativeName>
        <fullName evidence="1">Guided entry of tail-anchored proteins 1</fullName>
    </alternativeName>
</protein>
<keyword id="KW-0175">Coiled coil</keyword>
<keyword id="KW-0256">Endoplasmic reticulum</keyword>
<keyword id="KW-0472">Membrane</keyword>
<keyword id="KW-0812">Transmembrane</keyword>
<keyword id="KW-1133">Transmembrane helix</keyword>
<keyword id="KW-0813">Transport</keyword>
<name>GET1_ASPFC</name>